<protein>
    <recommendedName>
        <fullName evidence="1">DNA-directed RNA polymerase subunit gamma</fullName>
        <shortName evidence="1">RNAP subunit gamma</shortName>
        <ecNumber evidence="1">2.7.7.6</ecNumber>
    </recommendedName>
    <alternativeName>
        <fullName evidence="1">RNA polymerase subunit gamma</fullName>
    </alternativeName>
    <alternativeName>
        <fullName evidence="1">Transcriptase subunit gamma</fullName>
    </alternativeName>
</protein>
<proteinExistence type="inferred from homology"/>
<name>RPOC1_MICAN</name>
<dbReference type="EC" id="2.7.7.6" evidence="1"/>
<dbReference type="EMBL" id="AP009552">
    <property type="protein sequence ID" value="BAG00933.1"/>
    <property type="molecule type" value="Genomic_DNA"/>
</dbReference>
<dbReference type="RefSeq" id="WP_004163413.1">
    <property type="nucleotide sequence ID" value="NC_010296.1"/>
</dbReference>
<dbReference type="SMR" id="B0JSN9"/>
<dbReference type="STRING" id="449447.MAE_11110"/>
<dbReference type="PaxDb" id="449447-MAE_11110"/>
<dbReference type="EnsemblBacteria" id="BAG00933">
    <property type="protein sequence ID" value="BAG00933"/>
    <property type="gene ID" value="MAE_11110"/>
</dbReference>
<dbReference type="KEGG" id="mar:MAE_11110"/>
<dbReference type="eggNOG" id="COG0086">
    <property type="taxonomic scope" value="Bacteria"/>
</dbReference>
<dbReference type="HOGENOM" id="CLU_030022_2_0_3"/>
<dbReference type="BioCyc" id="MAER449447:MAE_RS04895-MONOMER"/>
<dbReference type="Proteomes" id="UP000001510">
    <property type="component" value="Chromosome"/>
</dbReference>
<dbReference type="GO" id="GO:0000428">
    <property type="term" value="C:DNA-directed RNA polymerase complex"/>
    <property type="evidence" value="ECO:0007669"/>
    <property type="project" value="UniProtKB-KW"/>
</dbReference>
<dbReference type="GO" id="GO:0003677">
    <property type="term" value="F:DNA binding"/>
    <property type="evidence" value="ECO:0007669"/>
    <property type="project" value="UniProtKB-UniRule"/>
</dbReference>
<dbReference type="GO" id="GO:0003899">
    <property type="term" value="F:DNA-directed RNA polymerase activity"/>
    <property type="evidence" value="ECO:0007669"/>
    <property type="project" value="UniProtKB-UniRule"/>
</dbReference>
<dbReference type="GO" id="GO:0000287">
    <property type="term" value="F:magnesium ion binding"/>
    <property type="evidence" value="ECO:0007669"/>
    <property type="project" value="UniProtKB-UniRule"/>
</dbReference>
<dbReference type="GO" id="GO:0008270">
    <property type="term" value="F:zinc ion binding"/>
    <property type="evidence" value="ECO:0007669"/>
    <property type="project" value="UniProtKB-UniRule"/>
</dbReference>
<dbReference type="GO" id="GO:0006351">
    <property type="term" value="P:DNA-templated transcription"/>
    <property type="evidence" value="ECO:0007669"/>
    <property type="project" value="UniProtKB-UniRule"/>
</dbReference>
<dbReference type="Gene3D" id="1.10.40.90">
    <property type="match status" value="1"/>
</dbReference>
<dbReference type="Gene3D" id="2.40.40.20">
    <property type="match status" value="1"/>
</dbReference>
<dbReference type="Gene3D" id="4.10.860.120">
    <property type="entry name" value="RNA polymerase II, clamp domain"/>
    <property type="match status" value="1"/>
</dbReference>
<dbReference type="Gene3D" id="1.10.274.100">
    <property type="entry name" value="RNA polymerase Rpb1, domain 3"/>
    <property type="match status" value="1"/>
</dbReference>
<dbReference type="HAMAP" id="MF_01323">
    <property type="entry name" value="RNApol_bact_RpoC1"/>
    <property type="match status" value="1"/>
</dbReference>
<dbReference type="InterPro" id="IPR012755">
    <property type="entry name" value="DNA-dir_RpoC1_gamma"/>
</dbReference>
<dbReference type="InterPro" id="IPR045867">
    <property type="entry name" value="DNA-dir_RpoC_beta_prime"/>
</dbReference>
<dbReference type="InterPro" id="IPR000722">
    <property type="entry name" value="RNA_pol_asu"/>
</dbReference>
<dbReference type="InterPro" id="IPR006592">
    <property type="entry name" value="RNA_pol_N"/>
</dbReference>
<dbReference type="InterPro" id="IPR007080">
    <property type="entry name" value="RNA_pol_Rpb1_1"/>
</dbReference>
<dbReference type="InterPro" id="IPR007066">
    <property type="entry name" value="RNA_pol_Rpb1_3"/>
</dbReference>
<dbReference type="InterPro" id="IPR042102">
    <property type="entry name" value="RNA_pol_Rpb1_3_sf"/>
</dbReference>
<dbReference type="InterPro" id="IPR044893">
    <property type="entry name" value="RNA_pol_Rpb1_clamp_domain"/>
</dbReference>
<dbReference type="InterPro" id="IPR034678">
    <property type="entry name" value="RNApol_RpoC1"/>
</dbReference>
<dbReference type="NCBIfam" id="NF002729">
    <property type="entry name" value="PRK02625.1"/>
    <property type="match status" value="1"/>
</dbReference>
<dbReference type="NCBIfam" id="TIGR02387">
    <property type="entry name" value="rpoC1_cyan"/>
    <property type="match status" value="1"/>
</dbReference>
<dbReference type="PANTHER" id="PTHR19376">
    <property type="entry name" value="DNA-DIRECTED RNA POLYMERASE"/>
    <property type="match status" value="1"/>
</dbReference>
<dbReference type="PANTHER" id="PTHR19376:SF54">
    <property type="entry name" value="DNA-DIRECTED RNA POLYMERASE SUBUNIT BETA"/>
    <property type="match status" value="1"/>
</dbReference>
<dbReference type="Pfam" id="PF04997">
    <property type="entry name" value="RNA_pol_Rpb1_1"/>
    <property type="match status" value="1"/>
</dbReference>
<dbReference type="Pfam" id="PF00623">
    <property type="entry name" value="RNA_pol_Rpb1_2"/>
    <property type="match status" value="2"/>
</dbReference>
<dbReference type="Pfam" id="PF04983">
    <property type="entry name" value="RNA_pol_Rpb1_3"/>
    <property type="match status" value="1"/>
</dbReference>
<dbReference type="SMART" id="SM00663">
    <property type="entry name" value="RPOLA_N"/>
    <property type="match status" value="1"/>
</dbReference>
<dbReference type="SUPFAM" id="SSF64484">
    <property type="entry name" value="beta and beta-prime subunits of DNA dependent RNA-polymerase"/>
    <property type="match status" value="1"/>
</dbReference>
<keyword id="KW-0240">DNA-directed RNA polymerase</keyword>
<keyword id="KW-0460">Magnesium</keyword>
<keyword id="KW-0479">Metal-binding</keyword>
<keyword id="KW-0548">Nucleotidyltransferase</keyword>
<keyword id="KW-0804">Transcription</keyword>
<keyword id="KW-0808">Transferase</keyword>
<keyword id="KW-0862">Zinc</keyword>
<sequence length="626" mass="71097">MKTPTDQRFDYVKIGLASPERIRQWGERTLPNGQVVGEVTKPETINYRTLKPEMDGLFCEKIFGPSKDWECWCGKYKRVRHRGIVCERCGVEVTESRVRRHRMGFIKLAAPVTHVWYLKGIPSYLSILLDMPLRDVEQIVYFNAYVVLDPGNAGNLSYKQLLSEDQWLEIEEEIYAEDSELVGIEVGIGAEAIQRLLQEINLEEEAERLRTEIVESKGQKRAKLIKRLRVIDNFIATGSQAEWMVLSVIPVIPPDLRPMVQLDGGRFATSDLNDLYRRVINRNNRLSRLQEILAPEIIVRNEKRMLQEAVDALIDNGRRGRTVVGANNRALKSLSDIIEGKQGRFRQNLLGKRVDYSGRSVIVVGPKLKIYQCGLPREMAIELFQPFVIHRLIKLGIVNNIKAAKKMIQRGDANVWHVLDEVITGHPVMLNRAPTLHRLGIQAFEPILVEGRAIQLHPLVCPAFNADFDGDQMAVHIPLSLEAQSEARLLMLACHNILSPATGRPIVAPSQDMVLGCYYLTAENPKAQKGGGRYFASMDDAIRAFDQGLVDLHASVWLRLPVGEKVKTNKPDEEVLETETLPDGSIWKYYRERKTREKDGEIISQYVRTTVGRIIYNKTILEALVV</sequence>
<accession>B0JSN9</accession>
<comment type="function">
    <text evidence="1">DNA-dependent RNA polymerase catalyzes the transcription of DNA into RNA using the four ribonucleoside triphosphates as substrates.</text>
</comment>
<comment type="catalytic activity">
    <reaction evidence="1">
        <text>RNA(n) + a ribonucleoside 5'-triphosphate = RNA(n+1) + diphosphate</text>
        <dbReference type="Rhea" id="RHEA:21248"/>
        <dbReference type="Rhea" id="RHEA-COMP:14527"/>
        <dbReference type="Rhea" id="RHEA-COMP:17342"/>
        <dbReference type="ChEBI" id="CHEBI:33019"/>
        <dbReference type="ChEBI" id="CHEBI:61557"/>
        <dbReference type="ChEBI" id="CHEBI:140395"/>
        <dbReference type="EC" id="2.7.7.6"/>
    </reaction>
</comment>
<comment type="cofactor">
    <cofactor evidence="1">
        <name>Mg(2+)</name>
        <dbReference type="ChEBI" id="CHEBI:18420"/>
    </cofactor>
    <text evidence="1">Binds 1 Mg(2+) ion per subunit.</text>
</comment>
<comment type="cofactor">
    <cofactor evidence="1">
        <name>Zn(2+)</name>
        <dbReference type="ChEBI" id="CHEBI:29105"/>
    </cofactor>
    <text evidence="1">Binds 1 Zn(2+) ion per subunit.</text>
</comment>
<comment type="subunit">
    <text evidence="1">In cyanobacteria the RNAP catalytic core is composed of 2 alpha, 1 beta, 1 beta', 1 gamma and 1 omega subunit. When a sigma factor is associated with the core the holoenzyme is formed, which can initiate transcription.</text>
</comment>
<comment type="similarity">
    <text evidence="1">Belongs to the RNA polymerase beta' chain family. RpoC1 subfamily.</text>
</comment>
<organism>
    <name type="scientific">Microcystis aeruginosa (strain NIES-843 / IAM M-2473)</name>
    <dbReference type="NCBI Taxonomy" id="449447"/>
    <lineage>
        <taxon>Bacteria</taxon>
        <taxon>Bacillati</taxon>
        <taxon>Cyanobacteriota</taxon>
        <taxon>Cyanophyceae</taxon>
        <taxon>Oscillatoriophycideae</taxon>
        <taxon>Chroococcales</taxon>
        <taxon>Microcystaceae</taxon>
        <taxon>Microcystis</taxon>
    </lineage>
</organism>
<reference key="1">
    <citation type="journal article" date="2007" name="DNA Res.">
        <title>Complete genomic structure of the bloom-forming toxic cyanobacterium Microcystis aeruginosa NIES-843.</title>
        <authorList>
            <person name="Kaneko T."/>
            <person name="Nakajima N."/>
            <person name="Okamoto S."/>
            <person name="Suzuki I."/>
            <person name="Tanabe Y."/>
            <person name="Tamaoki M."/>
            <person name="Nakamura Y."/>
            <person name="Kasai F."/>
            <person name="Watanabe A."/>
            <person name="Kawashima K."/>
            <person name="Kishida Y."/>
            <person name="Ono A."/>
            <person name="Shimizu Y."/>
            <person name="Takahashi C."/>
            <person name="Minami C."/>
            <person name="Fujishiro T."/>
            <person name="Kohara M."/>
            <person name="Katoh M."/>
            <person name="Nakazaki N."/>
            <person name="Nakayama S."/>
            <person name="Yamada M."/>
            <person name="Tabata S."/>
            <person name="Watanabe M.M."/>
        </authorList>
    </citation>
    <scope>NUCLEOTIDE SEQUENCE [LARGE SCALE GENOMIC DNA]</scope>
    <source>
        <strain>NIES-843 / IAM M-247</strain>
    </source>
</reference>
<feature type="chain" id="PRO_1000086421" description="DNA-directed RNA polymerase subunit gamma">
    <location>
        <begin position="1"/>
        <end position="626"/>
    </location>
</feature>
<feature type="binding site" evidence="1">
    <location>
        <position position="71"/>
    </location>
    <ligand>
        <name>Zn(2+)</name>
        <dbReference type="ChEBI" id="CHEBI:29105"/>
    </ligand>
</feature>
<feature type="binding site" evidence="1">
    <location>
        <position position="73"/>
    </location>
    <ligand>
        <name>Zn(2+)</name>
        <dbReference type="ChEBI" id="CHEBI:29105"/>
    </ligand>
</feature>
<feature type="binding site" evidence="1">
    <location>
        <position position="86"/>
    </location>
    <ligand>
        <name>Zn(2+)</name>
        <dbReference type="ChEBI" id="CHEBI:29105"/>
    </ligand>
</feature>
<feature type="binding site" evidence="1">
    <location>
        <position position="89"/>
    </location>
    <ligand>
        <name>Zn(2+)</name>
        <dbReference type="ChEBI" id="CHEBI:29105"/>
    </ligand>
</feature>
<feature type="binding site" evidence="1">
    <location>
        <position position="467"/>
    </location>
    <ligand>
        <name>Mg(2+)</name>
        <dbReference type="ChEBI" id="CHEBI:18420"/>
    </ligand>
</feature>
<feature type="binding site" evidence="1">
    <location>
        <position position="469"/>
    </location>
    <ligand>
        <name>Mg(2+)</name>
        <dbReference type="ChEBI" id="CHEBI:18420"/>
    </ligand>
</feature>
<feature type="binding site" evidence="1">
    <location>
        <position position="471"/>
    </location>
    <ligand>
        <name>Mg(2+)</name>
        <dbReference type="ChEBI" id="CHEBI:18420"/>
    </ligand>
</feature>
<evidence type="ECO:0000255" key="1">
    <source>
        <dbReference type="HAMAP-Rule" id="MF_01323"/>
    </source>
</evidence>
<gene>
    <name evidence="1" type="primary">rpoC1</name>
    <name type="ordered locus">MAE_11110</name>
</gene>